<gene>
    <name evidence="1" type="primary">tatD</name>
    <name type="ordered locus">EFER_3641</name>
</gene>
<protein>
    <recommendedName>
        <fullName evidence="1">3'-5' ssDNA/RNA exonuclease TatD</fullName>
        <ecNumber evidence="1">3.1.11.-</ecNumber>
        <ecNumber evidence="1">3.1.13.-</ecNumber>
    </recommendedName>
    <alternativeName>
        <fullName evidence="1">DNase TatD</fullName>
    </alternativeName>
</protein>
<organism>
    <name type="scientific">Escherichia fergusonii (strain ATCC 35469 / DSM 13698 / CCUG 18766 / IAM 14443 / JCM 21226 / LMG 7866 / NBRC 102419 / NCTC 12128 / CDC 0568-73)</name>
    <dbReference type="NCBI Taxonomy" id="585054"/>
    <lineage>
        <taxon>Bacteria</taxon>
        <taxon>Pseudomonadati</taxon>
        <taxon>Pseudomonadota</taxon>
        <taxon>Gammaproteobacteria</taxon>
        <taxon>Enterobacterales</taxon>
        <taxon>Enterobacteriaceae</taxon>
        <taxon>Escherichia</taxon>
    </lineage>
</organism>
<comment type="function">
    <text evidence="1">3'-5' exonuclease that prefers single-stranded DNA and RNA. May play a role in the H(2)O(2)-induced DNA damage repair.</text>
</comment>
<comment type="cofactor">
    <cofactor evidence="1">
        <name>Mg(2+)</name>
        <dbReference type="ChEBI" id="CHEBI:18420"/>
    </cofactor>
</comment>
<comment type="subunit">
    <text evidence="1">Monomer.</text>
</comment>
<comment type="subcellular location">
    <subcellularLocation>
        <location evidence="1">Cytoplasm</location>
    </subcellularLocation>
</comment>
<comment type="similarity">
    <text evidence="1">Belongs to the metallo-dependent hydrolases superfamily. TatD-type hydrolase family. TatD subfamily.</text>
</comment>
<proteinExistence type="inferred from homology"/>
<feature type="chain" id="PRO_0000412743" description="3'-5' ssDNA/RNA exonuclease TatD">
    <location>
        <begin position="1"/>
        <end position="260"/>
    </location>
</feature>
<feature type="binding site" evidence="1">
    <location>
        <position position="91"/>
    </location>
    <ligand>
        <name>a divalent metal cation</name>
        <dbReference type="ChEBI" id="CHEBI:60240"/>
    </ligand>
</feature>
<feature type="binding site" evidence="1">
    <location>
        <position position="127"/>
    </location>
    <ligand>
        <name>a divalent metal cation</name>
        <dbReference type="ChEBI" id="CHEBI:60240"/>
    </ligand>
</feature>
<feature type="binding site" evidence="1">
    <location>
        <position position="152"/>
    </location>
    <ligand>
        <name>a divalent metal cation</name>
        <dbReference type="ChEBI" id="CHEBI:60240"/>
    </ligand>
</feature>
<reference key="1">
    <citation type="journal article" date="2009" name="PLoS Genet.">
        <title>Organised genome dynamics in the Escherichia coli species results in highly diverse adaptive paths.</title>
        <authorList>
            <person name="Touchon M."/>
            <person name="Hoede C."/>
            <person name="Tenaillon O."/>
            <person name="Barbe V."/>
            <person name="Baeriswyl S."/>
            <person name="Bidet P."/>
            <person name="Bingen E."/>
            <person name="Bonacorsi S."/>
            <person name="Bouchier C."/>
            <person name="Bouvet O."/>
            <person name="Calteau A."/>
            <person name="Chiapello H."/>
            <person name="Clermont O."/>
            <person name="Cruveiller S."/>
            <person name="Danchin A."/>
            <person name="Diard M."/>
            <person name="Dossat C."/>
            <person name="Karoui M.E."/>
            <person name="Frapy E."/>
            <person name="Garry L."/>
            <person name="Ghigo J.M."/>
            <person name="Gilles A.M."/>
            <person name="Johnson J."/>
            <person name="Le Bouguenec C."/>
            <person name="Lescat M."/>
            <person name="Mangenot S."/>
            <person name="Martinez-Jehanne V."/>
            <person name="Matic I."/>
            <person name="Nassif X."/>
            <person name="Oztas S."/>
            <person name="Petit M.A."/>
            <person name="Pichon C."/>
            <person name="Rouy Z."/>
            <person name="Ruf C.S."/>
            <person name="Schneider D."/>
            <person name="Tourret J."/>
            <person name="Vacherie B."/>
            <person name="Vallenet D."/>
            <person name="Medigue C."/>
            <person name="Rocha E.P.C."/>
            <person name="Denamur E."/>
        </authorList>
    </citation>
    <scope>NUCLEOTIDE SEQUENCE [LARGE SCALE GENOMIC DNA]</scope>
    <source>
        <strain>ATCC 35469 / DSM 13698 / BCRC 15582 / CCUG 18766 / IAM 14443 / JCM 21226 / LMG 7866 / NBRC 102419 / NCTC 12128 / CDC 0568-73</strain>
    </source>
</reference>
<dbReference type="EC" id="3.1.11.-" evidence="1"/>
<dbReference type="EC" id="3.1.13.-" evidence="1"/>
<dbReference type="EMBL" id="CU928158">
    <property type="protein sequence ID" value="CAQ91103.1"/>
    <property type="molecule type" value="Genomic_DNA"/>
</dbReference>
<dbReference type="RefSeq" id="WP_015953849.1">
    <property type="nucleotide sequence ID" value="NC_011740.1"/>
</dbReference>
<dbReference type="SMR" id="B7LTZ5"/>
<dbReference type="GeneID" id="75059758"/>
<dbReference type="KEGG" id="efe:EFER_3641"/>
<dbReference type="HOGENOM" id="CLU_031506_1_2_6"/>
<dbReference type="OrthoDB" id="9810005at2"/>
<dbReference type="Proteomes" id="UP000000745">
    <property type="component" value="Chromosome"/>
</dbReference>
<dbReference type="GO" id="GO:0005737">
    <property type="term" value="C:cytoplasm"/>
    <property type="evidence" value="ECO:0007669"/>
    <property type="project" value="UniProtKB-SubCell"/>
</dbReference>
<dbReference type="GO" id="GO:0000175">
    <property type="term" value="F:3'-5'-RNA exonuclease activity"/>
    <property type="evidence" value="ECO:0007669"/>
    <property type="project" value="UniProtKB-UniRule"/>
</dbReference>
<dbReference type="GO" id="GO:0000287">
    <property type="term" value="F:magnesium ion binding"/>
    <property type="evidence" value="ECO:0007669"/>
    <property type="project" value="UniProtKB-UniRule"/>
</dbReference>
<dbReference type="GO" id="GO:0008310">
    <property type="term" value="F:single-stranded DNA 3'-5' DNA exonuclease activity"/>
    <property type="evidence" value="ECO:0007669"/>
    <property type="project" value="UniProtKB-UniRule"/>
</dbReference>
<dbReference type="CDD" id="cd01310">
    <property type="entry name" value="TatD_DNAse"/>
    <property type="match status" value="1"/>
</dbReference>
<dbReference type="FunFam" id="3.20.20.140:FF:000018">
    <property type="entry name" value="3'-5' ssDNA/RNA exonuclease TatD"/>
    <property type="match status" value="1"/>
</dbReference>
<dbReference type="Gene3D" id="3.20.20.140">
    <property type="entry name" value="Metal-dependent hydrolases"/>
    <property type="match status" value="1"/>
</dbReference>
<dbReference type="HAMAP" id="MF_00901">
    <property type="entry name" value="TatD_exonuclease"/>
    <property type="match status" value="1"/>
</dbReference>
<dbReference type="InterPro" id="IPR018228">
    <property type="entry name" value="DNase_TatD-rel_CS"/>
</dbReference>
<dbReference type="InterPro" id="IPR024918">
    <property type="entry name" value="Exonuc_TatD"/>
</dbReference>
<dbReference type="InterPro" id="IPR032466">
    <property type="entry name" value="Metal_Hydrolase"/>
</dbReference>
<dbReference type="InterPro" id="IPR001130">
    <property type="entry name" value="TatD-like"/>
</dbReference>
<dbReference type="InterPro" id="IPR050891">
    <property type="entry name" value="TatD-type_Hydrolase"/>
</dbReference>
<dbReference type="NCBIfam" id="NF007745">
    <property type="entry name" value="PRK10425.1"/>
    <property type="match status" value="1"/>
</dbReference>
<dbReference type="PANTHER" id="PTHR10060:SF15">
    <property type="entry name" value="DEOXYRIBONUCLEASE TATDN1"/>
    <property type="match status" value="1"/>
</dbReference>
<dbReference type="PANTHER" id="PTHR10060">
    <property type="entry name" value="TATD FAMILY DEOXYRIBONUCLEASE"/>
    <property type="match status" value="1"/>
</dbReference>
<dbReference type="Pfam" id="PF01026">
    <property type="entry name" value="TatD_DNase"/>
    <property type="match status" value="1"/>
</dbReference>
<dbReference type="PIRSF" id="PIRSF005902">
    <property type="entry name" value="DNase_TatD"/>
    <property type="match status" value="1"/>
</dbReference>
<dbReference type="SUPFAM" id="SSF51556">
    <property type="entry name" value="Metallo-dependent hydrolases"/>
    <property type="match status" value="1"/>
</dbReference>
<dbReference type="PROSITE" id="PS01090">
    <property type="entry name" value="TATD_2"/>
    <property type="match status" value="1"/>
</dbReference>
<dbReference type="PROSITE" id="PS01091">
    <property type="entry name" value="TATD_3"/>
    <property type="match status" value="1"/>
</dbReference>
<evidence type="ECO:0000255" key="1">
    <source>
        <dbReference type="HAMAP-Rule" id="MF_00901"/>
    </source>
</evidence>
<sequence>MFDIGVNLTSSQFAKDRDDIVTRAFAAGVNGLLITGTNLRESQQAQKLARHYPHCWSTAGVHPHDSSQWQAATEEAIIELAAQPEVVAIGECGLDFNRNFSTPEEQERAFVAQLRIAAELNMPVFMHCRDAHERFITLLEPWLEKLPGAVLHCFTGTREEMQACVARGIYIGITGWVCDERRGLELRELLPLIPAEKLLIETDAPYLLPRDLTPKPTSRRNEPAYLPHILQRIAQWRGEDAACLAATTDTNVKTLFGISF</sequence>
<accession>B7LTZ5</accession>
<keyword id="KW-0963">Cytoplasm</keyword>
<keyword id="KW-0269">Exonuclease</keyword>
<keyword id="KW-0378">Hydrolase</keyword>
<keyword id="KW-0460">Magnesium</keyword>
<keyword id="KW-0479">Metal-binding</keyword>
<keyword id="KW-0540">Nuclease</keyword>
<name>TATD_ESCF3</name>